<gene>
    <name evidence="1" type="primary">hisA</name>
    <name type="ordered locus">BAD_1124</name>
</gene>
<reference key="1">
    <citation type="submission" date="2006-12" db="EMBL/GenBank/DDBJ databases">
        <title>Bifidobacterium adolescentis complete genome sequence.</title>
        <authorList>
            <person name="Suzuki T."/>
            <person name="Tsuda Y."/>
            <person name="Kanou N."/>
            <person name="Inoue T."/>
            <person name="Kumazaki K."/>
            <person name="Nagano S."/>
            <person name="Hirai S."/>
            <person name="Tanaka K."/>
            <person name="Watanabe K."/>
        </authorList>
    </citation>
    <scope>NUCLEOTIDE SEQUENCE [LARGE SCALE GENOMIC DNA]</scope>
    <source>
        <strain>ATCC 15703 / DSM 20083 / NCTC 11814 / E194a</strain>
    </source>
</reference>
<keyword id="KW-0028">Amino-acid biosynthesis</keyword>
<keyword id="KW-0963">Cytoplasm</keyword>
<keyword id="KW-0368">Histidine biosynthesis</keyword>
<keyword id="KW-0413">Isomerase</keyword>
<keyword id="KW-1185">Reference proteome</keyword>
<accession>A1A2H2</accession>
<comment type="catalytic activity">
    <reaction evidence="1">
        <text>1-(5-phospho-beta-D-ribosyl)-5-[(5-phospho-beta-D-ribosylamino)methylideneamino]imidazole-4-carboxamide = 5-[(5-phospho-1-deoxy-D-ribulos-1-ylimino)methylamino]-1-(5-phospho-beta-D-ribosyl)imidazole-4-carboxamide</text>
        <dbReference type="Rhea" id="RHEA:15469"/>
        <dbReference type="ChEBI" id="CHEBI:58435"/>
        <dbReference type="ChEBI" id="CHEBI:58525"/>
        <dbReference type="EC" id="5.3.1.16"/>
    </reaction>
</comment>
<comment type="pathway">
    <text evidence="1">Amino-acid biosynthesis; L-histidine biosynthesis; L-histidine from 5-phospho-alpha-D-ribose 1-diphosphate: step 4/9.</text>
</comment>
<comment type="subcellular location">
    <subcellularLocation>
        <location evidence="1">Cytoplasm</location>
    </subcellularLocation>
</comment>
<comment type="similarity">
    <text evidence="1">Belongs to the HisA/HisF family.</text>
</comment>
<evidence type="ECO:0000255" key="1">
    <source>
        <dbReference type="HAMAP-Rule" id="MF_01014"/>
    </source>
</evidence>
<protein>
    <recommendedName>
        <fullName evidence="1">1-(5-phosphoribosyl)-5-[(5-phosphoribosylamino)methylideneamino] imidazole-4-carboxamide isomerase</fullName>
        <ecNumber evidence="1">5.3.1.16</ecNumber>
    </recommendedName>
    <alternativeName>
        <fullName evidence="1">Phosphoribosylformimino-5-aminoimidazole carboxamide ribotide isomerase</fullName>
    </alternativeName>
</protein>
<feature type="chain" id="PRO_0000290452" description="1-(5-phosphoribosyl)-5-[(5-phosphoribosylamino)methylideneamino] imidazole-4-carboxamide isomerase">
    <location>
        <begin position="1"/>
        <end position="241"/>
    </location>
</feature>
<feature type="active site" description="Proton acceptor" evidence="1">
    <location>
        <position position="10"/>
    </location>
</feature>
<feature type="active site" description="Proton donor" evidence="1">
    <location>
        <position position="131"/>
    </location>
</feature>
<sequence>MSLTLLPAVDVRDGKAVRLRQGESGSETDYGSPLEAARTWVESGAEWIHLVDLDAAFGTGNNRDQLRAIVKELGDKVNIEMSGGVRDDASLDAALEAGAARVNIGTAALENPDWTASVIKKYGDRVAVGLDVRGHTLAARGWVKEGGDLFETMKFLDSVGCSRYVVTDVARDGMMSGPNIELLREVASRTDAKVTASGGISKLDDLRNIKELAELGVDAAILGKSLYARAFTLEEALEVAR</sequence>
<proteinExistence type="inferred from homology"/>
<dbReference type="EC" id="5.3.1.16" evidence="1"/>
<dbReference type="EMBL" id="AP009256">
    <property type="protein sequence ID" value="BAF39905.1"/>
    <property type="molecule type" value="Genomic_DNA"/>
</dbReference>
<dbReference type="SMR" id="A1A2H2"/>
<dbReference type="STRING" id="367928.BAD_1124"/>
<dbReference type="PaxDb" id="1680-BADO_1182"/>
<dbReference type="GeneID" id="4556150"/>
<dbReference type="KEGG" id="bad:BAD_1124"/>
<dbReference type="HOGENOM" id="CLU_048577_1_1_11"/>
<dbReference type="UniPathway" id="UPA00031">
    <property type="reaction ID" value="UER00009"/>
</dbReference>
<dbReference type="Proteomes" id="UP000008702">
    <property type="component" value="Chromosome"/>
</dbReference>
<dbReference type="GO" id="GO:0005737">
    <property type="term" value="C:cytoplasm"/>
    <property type="evidence" value="ECO:0007669"/>
    <property type="project" value="UniProtKB-SubCell"/>
</dbReference>
<dbReference type="GO" id="GO:0003949">
    <property type="term" value="F:1-(5-phosphoribosyl)-5-[(5-phosphoribosylamino)methylideneamino]imidazole-4-carboxamide isomerase activity"/>
    <property type="evidence" value="ECO:0007669"/>
    <property type="project" value="UniProtKB-UniRule"/>
</dbReference>
<dbReference type="GO" id="GO:0004640">
    <property type="term" value="F:phosphoribosylanthranilate isomerase activity"/>
    <property type="evidence" value="ECO:0007669"/>
    <property type="project" value="InterPro"/>
</dbReference>
<dbReference type="GO" id="GO:0000105">
    <property type="term" value="P:L-histidine biosynthetic process"/>
    <property type="evidence" value="ECO:0007669"/>
    <property type="project" value="UniProtKB-UniRule"/>
</dbReference>
<dbReference type="GO" id="GO:0000162">
    <property type="term" value="P:L-tryptophan biosynthetic process"/>
    <property type="evidence" value="ECO:0007669"/>
    <property type="project" value="InterPro"/>
</dbReference>
<dbReference type="CDD" id="cd04732">
    <property type="entry name" value="HisA"/>
    <property type="match status" value="1"/>
</dbReference>
<dbReference type="FunFam" id="3.20.20.70:FF:000009">
    <property type="entry name" value="1-(5-phosphoribosyl)-5-[(5-phosphoribosylamino)methylideneamino] imidazole-4-carboxamide isomerase"/>
    <property type="match status" value="1"/>
</dbReference>
<dbReference type="Gene3D" id="3.20.20.70">
    <property type="entry name" value="Aldolase class I"/>
    <property type="match status" value="1"/>
</dbReference>
<dbReference type="HAMAP" id="MF_01014">
    <property type="entry name" value="HisA"/>
    <property type="match status" value="1"/>
</dbReference>
<dbReference type="InterPro" id="IPR013785">
    <property type="entry name" value="Aldolase_TIM"/>
</dbReference>
<dbReference type="InterPro" id="IPR006062">
    <property type="entry name" value="His_biosynth"/>
</dbReference>
<dbReference type="InterPro" id="IPR010188">
    <property type="entry name" value="HisA/PriA_Actinobacteria"/>
</dbReference>
<dbReference type="InterPro" id="IPR044524">
    <property type="entry name" value="Isoase_HisA-like"/>
</dbReference>
<dbReference type="InterPro" id="IPR023016">
    <property type="entry name" value="Isoase_HisA-like_bact"/>
</dbReference>
<dbReference type="InterPro" id="IPR011060">
    <property type="entry name" value="RibuloseP-bd_barrel"/>
</dbReference>
<dbReference type="NCBIfam" id="TIGR01919">
    <property type="entry name" value="hisA-trpF"/>
    <property type="match status" value="1"/>
</dbReference>
<dbReference type="PANTHER" id="PTHR43090">
    <property type="entry name" value="1-(5-PHOSPHORIBOSYL)-5-[(5-PHOSPHORIBOSYLAMINO)METHYLIDENEAMINO] IMIDAZOLE-4-CARBOXAMIDE ISOMERASE"/>
    <property type="match status" value="1"/>
</dbReference>
<dbReference type="PANTHER" id="PTHR43090:SF2">
    <property type="entry name" value="1-(5-PHOSPHORIBOSYL)-5-[(5-PHOSPHORIBOSYLAMINO)METHYLIDENEAMINO] IMIDAZOLE-4-CARBOXAMIDE ISOMERASE"/>
    <property type="match status" value="1"/>
</dbReference>
<dbReference type="Pfam" id="PF00977">
    <property type="entry name" value="His_biosynth"/>
    <property type="match status" value="1"/>
</dbReference>
<dbReference type="SUPFAM" id="SSF51366">
    <property type="entry name" value="Ribulose-phoshate binding barrel"/>
    <property type="match status" value="1"/>
</dbReference>
<organism>
    <name type="scientific">Bifidobacterium adolescentis (strain ATCC 15703 / DSM 20083 / NCTC 11814 / E194a)</name>
    <dbReference type="NCBI Taxonomy" id="367928"/>
    <lineage>
        <taxon>Bacteria</taxon>
        <taxon>Bacillati</taxon>
        <taxon>Actinomycetota</taxon>
        <taxon>Actinomycetes</taxon>
        <taxon>Bifidobacteriales</taxon>
        <taxon>Bifidobacteriaceae</taxon>
        <taxon>Bifidobacterium</taxon>
    </lineage>
</organism>
<name>HIS4_BIFAA</name>